<gene>
    <name type="primary">nrde-3</name>
    <name type="ORF">R04A9.2</name>
</gene>
<evidence type="ECO:0000255" key="1">
    <source>
        <dbReference type="PROSITE-ProRule" id="PRU00142"/>
    </source>
</evidence>
<evidence type="ECO:0000255" key="2">
    <source>
        <dbReference type="PROSITE-ProRule" id="PRU00150"/>
    </source>
</evidence>
<evidence type="ECO:0000256" key="3">
    <source>
        <dbReference type="SAM" id="MobiDB-lite"/>
    </source>
</evidence>
<evidence type="ECO:0000269" key="4">
    <source>
    </source>
</evidence>
<evidence type="ECO:0000269" key="5">
    <source>
    </source>
</evidence>
<evidence type="ECO:0000269" key="6">
    <source>
    </source>
</evidence>
<name>NRDE3_CAEEL</name>
<accession>Q21691</accession>
<organism>
    <name type="scientific">Caenorhabditis elegans</name>
    <dbReference type="NCBI Taxonomy" id="6239"/>
    <lineage>
        <taxon>Eukaryota</taxon>
        <taxon>Metazoa</taxon>
        <taxon>Ecdysozoa</taxon>
        <taxon>Nematoda</taxon>
        <taxon>Chromadorea</taxon>
        <taxon>Rhabditida</taxon>
        <taxon>Rhabditina</taxon>
        <taxon>Rhabditomorpha</taxon>
        <taxon>Rhabditoidea</taxon>
        <taxon>Rhabditidae</taxon>
        <taxon>Peloderinae</taxon>
        <taxon>Caenorhabditis</taxon>
    </lineage>
</organism>
<comment type="function">
    <text evidence="4 5 6">Transports small interfering RNAs (siRNAs) from the cytoplasm to the nucleus. Required for RNA interference (RNAi) in nuclei (PubMed:18653886, PubMed:34365510). Required for exogenous RNAi-induced H3K27 methylation (PubMed:26365259).</text>
</comment>
<comment type="interaction">
    <interactant intactId="EBI-2419607">
        <id>Q21691</id>
    </interactant>
    <interactant intactId="EBI-16359048">
        <id>G5EG51</id>
        <label>nrde-2</label>
    </interactant>
    <organismsDiffer>false</organismsDiffer>
    <experiments>2</experiments>
</comment>
<comment type="subcellular location">
    <subcellularLocation>
        <location evidence="4 6">Cytoplasm</location>
    </subcellularLocation>
    <subcellularLocation>
        <location evidence="4 6">Nucleus</location>
    </subcellularLocation>
    <text evidence="6">siRNA binding is necessary and sufficient for distribution of nrde-3 to the nucleus.</text>
</comment>
<reference key="1">
    <citation type="journal article" date="1998" name="Science">
        <title>Genome sequence of the nematode C. elegans: a platform for investigating biology.</title>
        <authorList>
            <consortium name="The C. elegans sequencing consortium"/>
        </authorList>
    </citation>
    <scope>NUCLEOTIDE SEQUENCE [LARGE SCALE GENOMIC DNA]</scope>
    <source>
        <strain>Bristol N2</strain>
    </source>
</reference>
<reference key="2">
    <citation type="journal article" date="2008" name="Science">
        <title>An Argonaute transports siRNAs from the cytoplasm to the nucleus.</title>
        <authorList>
            <person name="Guang S."/>
            <person name="Bochner A.F."/>
            <person name="Pavelec D.M."/>
            <person name="Burkhart K.B."/>
            <person name="Harding S."/>
            <person name="Lachowiec J."/>
            <person name="Kennedy S."/>
        </authorList>
    </citation>
    <scope>FUNCTION</scope>
    <scope>SUBCELLULAR LOCATION</scope>
    <scope>MUTAGENESIS OF LYS-80; ARG-81; LYS-82; TYR-463 AND TYR-464</scope>
</reference>
<reference key="3">
    <citation type="journal article" date="2010" name="Nature">
        <title>Small regulatory RNAs inhibit RNA polymerase II during the elongation phase of transcription.</title>
        <authorList>
            <person name="Guang S."/>
            <person name="Bochner A.F."/>
            <person name="Burkhart K.B."/>
            <person name="Burton N."/>
            <person name="Pavelec D.M."/>
            <person name="Kennedy S."/>
        </authorList>
    </citation>
    <scope>INTERACTION WITH NRDE-2</scope>
</reference>
<reference key="4">
    <citation type="journal article" date="2015" name="Curr. Biol.">
        <title>The Nrde pathway mediates small-RNA-directed histone H3 lysine 27 trimethylation in Caenorhabditis elegans.</title>
        <authorList>
            <person name="Mao H."/>
            <person name="Zhu C."/>
            <person name="Zong D."/>
            <person name="Weng C."/>
            <person name="Yang X."/>
            <person name="Huang H."/>
            <person name="Liu D."/>
            <person name="Feng X."/>
            <person name="Guang S."/>
        </authorList>
    </citation>
    <scope>FUNCTION</scope>
</reference>
<reference key="5">
    <citation type="journal article" date="2021" name="Nucleic Acids Res.">
        <title>Antisense ribosomal siRNAs inhibit RNA polymerase I-directed transcription in C. elegans.</title>
        <authorList>
            <person name="Liao S."/>
            <person name="Chen X."/>
            <person name="Xu T."/>
            <person name="Jin Q."/>
            <person name="Xu Z."/>
            <person name="Xu D."/>
            <person name="Zhou X."/>
            <person name="Zhu C."/>
            <person name="Guang S."/>
            <person name="Feng X."/>
        </authorList>
    </citation>
    <scope>FUNCTION</scope>
    <scope>SUBCELLULAR LOCATION</scope>
</reference>
<proteinExistence type="evidence at protein level"/>
<feature type="chain" id="PRO_0000420973" description="Nuclear RNAi defective-3 protein">
    <location>
        <begin position="1"/>
        <end position="1057"/>
    </location>
</feature>
<feature type="domain" description="PAZ" evidence="1">
    <location>
        <begin position="387"/>
        <end position="500"/>
    </location>
</feature>
<feature type="domain" description="Piwi" evidence="2">
    <location>
        <begin position="677"/>
        <end position="1001"/>
    </location>
</feature>
<feature type="region of interest" description="Disordered" evidence="3">
    <location>
        <begin position="1"/>
        <end position="89"/>
    </location>
</feature>
<feature type="region of interest" description="Disordered" evidence="3">
    <location>
        <begin position="344"/>
        <end position="388"/>
    </location>
</feature>
<feature type="compositionally biased region" description="Low complexity" evidence="3">
    <location>
        <begin position="17"/>
        <end position="30"/>
    </location>
</feature>
<feature type="compositionally biased region" description="Basic and acidic residues" evidence="3">
    <location>
        <begin position="67"/>
        <end position="81"/>
    </location>
</feature>
<feature type="compositionally biased region" description="Basic and acidic residues" evidence="3">
    <location>
        <begin position="356"/>
        <end position="388"/>
    </location>
</feature>
<feature type="mutagenesis site" description="No nuclear localization." evidence="4">
    <original>K</original>
    <variation>A</variation>
    <location>
        <position position="80"/>
    </location>
</feature>
<feature type="mutagenesis site" description="No nuclear localization." evidence="4">
    <original>R</original>
    <variation>A</variation>
    <location>
        <position position="81"/>
    </location>
</feature>
<feature type="mutagenesis site" description="No nuclear localization." evidence="4">
    <original>K</original>
    <variation>A</variation>
    <location>
        <position position="82"/>
    </location>
</feature>
<feature type="mutagenesis site" description="Fails to interact with siRNAs and localizes predominantly to the cytoplasm." evidence="4">
    <original>Y</original>
    <variation>A</variation>
    <location>
        <position position="463"/>
    </location>
</feature>
<feature type="mutagenesis site" description="Fails to interact with siRNAs and localizes predominantly to the cytoplasm." evidence="4">
    <original>Y</original>
    <variation>A</variation>
    <location>
        <position position="464"/>
    </location>
</feature>
<protein>
    <recommendedName>
        <fullName>Nuclear RNAi defective-3 protein</fullName>
    </recommendedName>
</protein>
<keyword id="KW-0963">Cytoplasm</keyword>
<keyword id="KW-0539">Nucleus</keyword>
<keyword id="KW-1185">Reference proteome</keyword>
<keyword id="KW-0943">RNA-mediated gene silencing</keyword>
<sequence>MDLLDKVMGEMGSKPGSTAKKPATSASSTPRTNVWGTAKKPSSQQQPPKPLFTTPGSQQGSLGGRIPKREHTDRTGPDPKRKPLGGLSVPDSFNNFGTFRVQMNAWNLDISKMDERISRIMFRATLVHTDGRRFELSLGVSAFSGDVNRQQRRQAQCLLFRAWFKRNPELFKGMTDPAIAAYDAAETIYVGCSFFDVELTEHVCHLTEADFSPQEWKIVSLISRRSGSTFEIRIKTNPPIYTRGPNALTLENRSELTRIIEAITDQCLHNEKFLLYSSGTFPTKGGDIASPDEVTLIKSGFVKTTKIVDRDGVPDAIMTVDTTKSPFYKDTSLLKFFTAKMDQLTNSGGGPRGHNGGRERRDGGGNSRKYDDRRSPRDGEIDYDERTVSHYQRQFQDERISDGMLNTLKQSLKGLDCQPIHLKDSKANRSIMIDEIHTGTADSVTFEQKLPDGEMKLTSITEYYLQRYNYRLKFPHLPLVTSKRAKCYDFYPMELMSILPGQRIKQSHMTVDIQSYMTGKMSSLPDQHIKQSKLVLTEYLKLGDQPANRQMDAFRVSLKSIQPIVTNAHWLSPPDMKFANNQLYSLNPTRGVRFQTNGKFVMPARVKSVTIINYDKEFNRNVDMFAEGLAKHCSEQGMKFDSRPNSWKKVNLGSSDRRGTKVEIEEAIRNGVTIVFGIIAEKRPDMHDILKYFEEKLGQQTIQISSETADKFMRDHGGKQTIDNVIRKLNPKCGGTNFLIDVPESVGHRVVCNNSAEMRAKLYAKTQFIGFEMSHTGARTRFDIQKVMFDGDPTVVGVAYSLKHSAQLGGFSYFQESRLHKLTNLQEKMQICLNAYEQSSSYLPETVVVYRVGSGEGDYPQIVNEVNEMKLAARKKKHGYNPKFLVICTQRNSHIRVFPEHINERGKSMEQNVKSGTCVDVPGASHGYEEFILCCQTPLIGTVKPTKYTIIVNDCRWSKNEIMNVTYHLAFAHQVSYAPPAIPNVSYAAQNLAKRGHNNYKTHTKLVDMNDYSYRIKEKHEEIISSEEVDDILMRDFIETVSNDLNAMTINGRNFWA</sequence>
<dbReference type="EMBL" id="FO080331">
    <property type="protein sequence ID" value="CCD62910.1"/>
    <property type="molecule type" value="Genomic_DNA"/>
</dbReference>
<dbReference type="PIR" id="T16676">
    <property type="entry name" value="T16676"/>
</dbReference>
<dbReference type="RefSeq" id="NP_508092.1">
    <property type="nucleotide sequence ID" value="NM_075691.7"/>
</dbReference>
<dbReference type="SMR" id="Q21691"/>
<dbReference type="BioGRID" id="45345">
    <property type="interactions" value="5"/>
</dbReference>
<dbReference type="DIP" id="DIP-55715N"/>
<dbReference type="FunCoup" id="Q21691">
    <property type="interactions" value="35"/>
</dbReference>
<dbReference type="IntAct" id="Q21691">
    <property type="interactions" value="2"/>
</dbReference>
<dbReference type="STRING" id="6239.R04A9.2.1"/>
<dbReference type="PaxDb" id="6239-R04A9.2"/>
<dbReference type="PeptideAtlas" id="Q21691"/>
<dbReference type="EnsemblMetazoa" id="R04A9.2.1">
    <property type="protein sequence ID" value="R04A9.2.1"/>
    <property type="gene ID" value="WBGene00019862"/>
</dbReference>
<dbReference type="GeneID" id="180392"/>
<dbReference type="KEGG" id="cel:CELE_R04A9.2"/>
<dbReference type="UCSC" id="R04A9.2">
    <property type="organism name" value="c. elegans"/>
</dbReference>
<dbReference type="AGR" id="WB:WBGene00019862"/>
<dbReference type="CTD" id="180392"/>
<dbReference type="WormBase" id="R04A9.2">
    <property type="protein sequence ID" value="CE04789"/>
    <property type="gene ID" value="WBGene00019862"/>
    <property type="gene designation" value="nrde-3"/>
</dbReference>
<dbReference type="eggNOG" id="KOG1041">
    <property type="taxonomic scope" value="Eukaryota"/>
</dbReference>
<dbReference type="HOGENOM" id="CLU_012806_0_0_1"/>
<dbReference type="InParanoid" id="Q21691"/>
<dbReference type="OMA" id="YTRGPNA"/>
<dbReference type="OrthoDB" id="5812648at2759"/>
<dbReference type="PhylomeDB" id="Q21691"/>
<dbReference type="PRO" id="PR:Q21691"/>
<dbReference type="Proteomes" id="UP000001940">
    <property type="component" value="Chromosome X"/>
</dbReference>
<dbReference type="Bgee" id="WBGene00019862">
    <property type="expression patterns" value="Expressed in embryo and 4 other cell types or tissues"/>
</dbReference>
<dbReference type="GO" id="GO:0005737">
    <property type="term" value="C:cytoplasm"/>
    <property type="evidence" value="ECO:0000318"/>
    <property type="project" value="GO_Central"/>
</dbReference>
<dbReference type="GO" id="GO:0036464">
    <property type="term" value="C:cytoplasmic ribonucleoprotein granule"/>
    <property type="evidence" value="ECO:0000318"/>
    <property type="project" value="GO_Central"/>
</dbReference>
<dbReference type="GO" id="GO:0005634">
    <property type="term" value="C:nucleus"/>
    <property type="evidence" value="ECO:0000314"/>
    <property type="project" value="WormBase"/>
</dbReference>
<dbReference type="GO" id="GO:0016442">
    <property type="term" value="C:RISC complex"/>
    <property type="evidence" value="ECO:0000318"/>
    <property type="project" value="GO_Central"/>
</dbReference>
<dbReference type="GO" id="GO:0031332">
    <property type="term" value="C:RNAi effector complex"/>
    <property type="evidence" value="ECO:0000314"/>
    <property type="project" value="WormBase"/>
</dbReference>
<dbReference type="GO" id="GO:0035198">
    <property type="term" value="F:miRNA binding"/>
    <property type="evidence" value="ECO:0000318"/>
    <property type="project" value="GO_Central"/>
</dbReference>
<dbReference type="GO" id="GO:0004521">
    <property type="term" value="F:RNA endonuclease activity"/>
    <property type="evidence" value="ECO:0000318"/>
    <property type="project" value="GO_Central"/>
</dbReference>
<dbReference type="GO" id="GO:0003727">
    <property type="term" value="F:single-stranded RNA binding"/>
    <property type="evidence" value="ECO:0000318"/>
    <property type="project" value="GO_Central"/>
</dbReference>
<dbReference type="GO" id="GO:0035197">
    <property type="term" value="F:siRNA binding"/>
    <property type="evidence" value="ECO:0000314"/>
    <property type="project" value="WormBase"/>
</dbReference>
<dbReference type="GO" id="GO:0008355">
    <property type="term" value="P:olfactory learning"/>
    <property type="evidence" value="ECO:0000315"/>
    <property type="project" value="WormBase"/>
</dbReference>
<dbReference type="GO" id="GO:1900368">
    <property type="term" value="P:regulation of post-transcriptional gene silencing by regulatory ncRNA"/>
    <property type="evidence" value="ECO:0000315"/>
    <property type="project" value="CACAO"/>
</dbReference>
<dbReference type="GO" id="GO:0035194">
    <property type="term" value="P:regulatory ncRNA-mediated post-transcriptional gene silencing"/>
    <property type="evidence" value="ECO:0000315"/>
    <property type="project" value="WormBase"/>
</dbReference>
<dbReference type="GO" id="GO:0006404">
    <property type="term" value="P:RNA import into nucleus"/>
    <property type="evidence" value="ECO:0000315"/>
    <property type="project" value="WormBase"/>
</dbReference>
<dbReference type="CDD" id="cd02846">
    <property type="entry name" value="PAZ_argonaute_like"/>
    <property type="match status" value="1"/>
</dbReference>
<dbReference type="CDD" id="cd02826">
    <property type="entry name" value="Piwi-like"/>
    <property type="match status" value="1"/>
</dbReference>
<dbReference type="FunFam" id="3.30.420.10:FF:000298">
    <property type="entry name" value="Argonaute protein wago-1"/>
    <property type="match status" value="1"/>
</dbReference>
<dbReference type="Gene3D" id="3.40.50.2300">
    <property type="match status" value="1"/>
</dbReference>
<dbReference type="Gene3D" id="2.170.260.10">
    <property type="entry name" value="paz domain"/>
    <property type="match status" value="1"/>
</dbReference>
<dbReference type="Gene3D" id="3.30.420.10">
    <property type="entry name" value="Ribonuclease H-like superfamily/Ribonuclease H"/>
    <property type="match status" value="1"/>
</dbReference>
<dbReference type="InterPro" id="IPR056992">
    <property type="entry name" value="HRDE1/NRDE-3-like_N"/>
</dbReference>
<dbReference type="InterPro" id="IPR003100">
    <property type="entry name" value="PAZ_dom"/>
</dbReference>
<dbReference type="InterPro" id="IPR036085">
    <property type="entry name" value="PAZ_dom_sf"/>
</dbReference>
<dbReference type="InterPro" id="IPR003165">
    <property type="entry name" value="Piwi"/>
</dbReference>
<dbReference type="InterPro" id="IPR012337">
    <property type="entry name" value="RNaseH-like_sf"/>
</dbReference>
<dbReference type="InterPro" id="IPR036397">
    <property type="entry name" value="RNaseH_sf"/>
</dbReference>
<dbReference type="PANTHER" id="PTHR22891">
    <property type="entry name" value="EUKARYOTIC TRANSLATION INITIATION FACTOR 2C"/>
    <property type="match status" value="1"/>
</dbReference>
<dbReference type="Pfam" id="PF25128">
    <property type="entry name" value="HRDE1_NRDE3_N"/>
    <property type="match status" value="1"/>
</dbReference>
<dbReference type="Pfam" id="PF02170">
    <property type="entry name" value="PAZ"/>
    <property type="match status" value="1"/>
</dbReference>
<dbReference type="Pfam" id="PF02171">
    <property type="entry name" value="Piwi"/>
    <property type="match status" value="1"/>
</dbReference>
<dbReference type="SMART" id="SM00949">
    <property type="entry name" value="PAZ"/>
    <property type="match status" value="1"/>
</dbReference>
<dbReference type="SMART" id="SM00950">
    <property type="entry name" value="Piwi"/>
    <property type="match status" value="1"/>
</dbReference>
<dbReference type="SUPFAM" id="SSF101690">
    <property type="entry name" value="PAZ domain"/>
    <property type="match status" value="1"/>
</dbReference>
<dbReference type="SUPFAM" id="SSF53098">
    <property type="entry name" value="Ribonuclease H-like"/>
    <property type="match status" value="1"/>
</dbReference>
<dbReference type="PROSITE" id="PS50821">
    <property type="entry name" value="PAZ"/>
    <property type="match status" value="1"/>
</dbReference>
<dbReference type="PROSITE" id="PS50822">
    <property type="entry name" value="PIWI"/>
    <property type="match status" value="1"/>
</dbReference>